<accession>Q0T1H4</accession>
<organism>
    <name type="scientific">Shigella flexneri serotype 5b (strain 8401)</name>
    <dbReference type="NCBI Taxonomy" id="373384"/>
    <lineage>
        <taxon>Bacteria</taxon>
        <taxon>Pseudomonadati</taxon>
        <taxon>Pseudomonadota</taxon>
        <taxon>Gammaproteobacteria</taxon>
        <taxon>Enterobacterales</taxon>
        <taxon>Enterobacteriaceae</taxon>
        <taxon>Shigella</taxon>
    </lineage>
</organism>
<dbReference type="EC" id="2.1.1.77" evidence="1"/>
<dbReference type="EMBL" id="CP000266">
    <property type="protein sequence ID" value="ABF04841.1"/>
    <property type="molecule type" value="Genomic_DNA"/>
</dbReference>
<dbReference type="RefSeq" id="WP_000254708.1">
    <property type="nucleotide sequence ID" value="NC_008258.1"/>
</dbReference>
<dbReference type="SMR" id="Q0T1H4"/>
<dbReference type="GeneID" id="93779263"/>
<dbReference type="KEGG" id="sfv:SFV_2755"/>
<dbReference type="HOGENOM" id="CLU_055432_2_0_6"/>
<dbReference type="Proteomes" id="UP000000659">
    <property type="component" value="Chromosome"/>
</dbReference>
<dbReference type="GO" id="GO:0005737">
    <property type="term" value="C:cytoplasm"/>
    <property type="evidence" value="ECO:0007669"/>
    <property type="project" value="UniProtKB-SubCell"/>
</dbReference>
<dbReference type="GO" id="GO:0004719">
    <property type="term" value="F:protein-L-isoaspartate (D-aspartate) O-methyltransferase activity"/>
    <property type="evidence" value="ECO:0007669"/>
    <property type="project" value="UniProtKB-UniRule"/>
</dbReference>
<dbReference type="GO" id="GO:0032259">
    <property type="term" value="P:methylation"/>
    <property type="evidence" value="ECO:0007669"/>
    <property type="project" value="UniProtKB-KW"/>
</dbReference>
<dbReference type="GO" id="GO:0036211">
    <property type="term" value="P:protein modification process"/>
    <property type="evidence" value="ECO:0007669"/>
    <property type="project" value="UniProtKB-UniRule"/>
</dbReference>
<dbReference type="GO" id="GO:0030091">
    <property type="term" value="P:protein repair"/>
    <property type="evidence" value="ECO:0007669"/>
    <property type="project" value="UniProtKB-UniRule"/>
</dbReference>
<dbReference type="CDD" id="cd02440">
    <property type="entry name" value="AdoMet_MTases"/>
    <property type="match status" value="1"/>
</dbReference>
<dbReference type="FunFam" id="3.40.50.150:FF:000010">
    <property type="entry name" value="Protein-L-isoaspartate O-methyltransferase"/>
    <property type="match status" value="1"/>
</dbReference>
<dbReference type="Gene3D" id="3.40.50.150">
    <property type="entry name" value="Vaccinia Virus protein VP39"/>
    <property type="match status" value="1"/>
</dbReference>
<dbReference type="HAMAP" id="MF_00090">
    <property type="entry name" value="PIMT"/>
    <property type="match status" value="1"/>
</dbReference>
<dbReference type="InterPro" id="IPR000682">
    <property type="entry name" value="PCMT"/>
</dbReference>
<dbReference type="InterPro" id="IPR029063">
    <property type="entry name" value="SAM-dependent_MTases_sf"/>
</dbReference>
<dbReference type="NCBIfam" id="TIGR00080">
    <property type="entry name" value="pimt"/>
    <property type="match status" value="1"/>
</dbReference>
<dbReference type="NCBIfam" id="NF001453">
    <property type="entry name" value="PRK00312.1"/>
    <property type="match status" value="1"/>
</dbReference>
<dbReference type="PANTHER" id="PTHR11579">
    <property type="entry name" value="PROTEIN-L-ISOASPARTATE O-METHYLTRANSFERASE"/>
    <property type="match status" value="1"/>
</dbReference>
<dbReference type="PANTHER" id="PTHR11579:SF0">
    <property type="entry name" value="PROTEIN-L-ISOASPARTATE(D-ASPARTATE) O-METHYLTRANSFERASE"/>
    <property type="match status" value="1"/>
</dbReference>
<dbReference type="Pfam" id="PF01135">
    <property type="entry name" value="PCMT"/>
    <property type="match status" value="1"/>
</dbReference>
<dbReference type="SUPFAM" id="SSF53335">
    <property type="entry name" value="S-adenosyl-L-methionine-dependent methyltransferases"/>
    <property type="match status" value="1"/>
</dbReference>
<dbReference type="PROSITE" id="PS01279">
    <property type="entry name" value="PCMT"/>
    <property type="match status" value="1"/>
</dbReference>
<protein>
    <recommendedName>
        <fullName evidence="1">Protein-L-isoaspartate O-methyltransferase</fullName>
        <ecNumber evidence="1">2.1.1.77</ecNumber>
    </recommendedName>
    <alternativeName>
        <fullName evidence="1">L-isoaspartyl protein carboxyl methyltransferase</fullName>
    </alternativeName>
    <alternativeName>
        <fullName evidence="1">Protein L-isoaspartyl methyltransferase</fullName>
    </alternativeName>
    <alternativeName>
        <fullName evidence="1">Protein-beta-aspartate methyltransferase</fullName>
        <shortName evidence="1">PIMT</shortName>
    </alternativeName>
</protein>
<keyword id="KW-0963">Cytoplasm</keyword>
<keyword id="KW-0489">Methyltransferase</keyword>
<keyword id="KW-0949">S-adenosyl-L-methionine</keyword>
<keyword id="KW-0808">Transferase</keyword>
<name>PIMT_SHIF8</name>
<evidence type="ECO:0000255" key="1">
    <source>
        <dbReference type="HAMAP-Rule" id="MF_00090"/>
    </source>
</evidence>
<gene>
    <name evidence="1" type="primary">pcm</name>
    <name type="ordered locus">SFV_2755</name>
</gene>
<feature type="chain" id="PRO_1000004827" description="Protein-L-isoaspartate O-methyltransferase">
    <location>
        <begin position="1"/>
        <end position="208"/>
    </location>
</feature>
<feature type="active site" evidence="1">
    <location>
        <position position="59"/>
    </location>
</feature>
<reference key="1">
    <citation type="journal article" date="2006" name="BMC Genomics">
        <title>Complete genome sequence of Shigella flexneri 5b and comparison with Shigella flexneri 2a.</title>
        <authorList>
            <person name="Nie H."/>
            <person name="Yang F."/>
            <person name="Zhang X."/>
            <person name="Yang J."/>
            <person name="Chen L."/>
            <person name="Wang J."/>
            <person name="Xiong Z."/>
            <person name="Peng J."/>
            <person name="Sun L."/>
            <person name="Dong J."/>
            <person name="Xue Y."/>
            <person name="Xu X."/>
            <person name="Chen S."/>
            <person name="Yao Z."/>
            <person name="Shen Y."/>
            <person name="Jin Q."/>
        </authorList>
    </citation>
    <scope>NUCLEOTIDE SEQUENCE [LARGE SCALE GENOMIC DNA]</scope>
    <source>
        <strain>8401</strain>
    </source>
</reference>
<proteinExistence type="inferred from homology"/>
<comment type="function">
    <text evidence="1">Catalyzes the methyl esterification of L-isoaspartyl residues in peptides and proteins that result from spontaneous decomposition of normal L-aspartyl and L-asparaginyl residues. It plays a role in the repair and/or degradation of damaged proteins.</text>
</comment>
<comment type="catalytic activity">
    <reaction evidence="1">
        <text>[protein]-L-isoaspartate + S-adenosyl-L-methionine = [protein]-L-isoaspartate alpha-methyl ester + S-adenosyl-L-homocysteine</text>
        <dbReference type="Rhea" id="RHEA:12705"/>
        <dbReference type="Rhea" id="RHEA-COMP:12143"/>
        <dbReference type="Rhea" id="RHEA-COMP:12144"/>
        <dbReference type="ChEBI" id="CHEBI:57856"/>
        <dbReference type="ChEBI" id="CHEBI:59789"/>
        <dbReference type="ChEBI" id="CHEBI:90596"/>
        <dbReference type="ChEBI" id="CHEBI:90598"/>
        <dbReference type="EC" id="2.1.1.77"/>
    </reaction>
</comment>
<comment type="subcellular location">
    <subcellularLocation>
        <location evidence="1">Cytoplasm</location>
    </subcellularLocation>
</comment>
<comment type="similarity">
    <text evidence="1">Belongs to the methyltransferase superfamily. L-isoaspartyl/D-aspartyl protein methyltransferase family.</text>
</comment>
<sequence>MVSRRVQALLDQLRAQGIQDEQVLNALAAVPREKFVDEAFEQKAWDNIALPIGQGQTISQPYMVARMTELLELTPQSRVLEIGTGSGYQTAILAHLVQHVCSVERIKGLQWQARRRLKNLDLHNVSTRHGDGWQGWQARAPFDAIIVTAAPPEIPTALMTQLDEGGILVLPVGEEHQYLKRVRRRGGEFIIDTVEAVRFVPLVKGELA</sequence>